<gene>
    <name evidence="1" type="primary">miaB</name>
    <name type="ordered locus">USA300HOU_1224</name>
</gene>
<accession>A8Z1W3</accession>
<keyword id="KW-0004">4Fe-4S</keyword>
<keyword id="KW-0963">Cytoplasm</keyword>
<keyword id="KW-0408">Iron</keyword>
<keyword id="KW-0411">Iron-sulfur</keyword>
<keyword id="KW-0479">Metal-binding</keyword>
<keyword id="KW-0949">S-adenosyl-L-methionine</keyword>
<keyword id="KW-0808">Transferase</keyword>
<keyword id="KW-0819">tRNA processing</keyword>
<feature type="chain" id="PRO_0000374576" description="tRNA-2-methylthio-N(6)-dimethylallyladenosine synthase">
    <location>
        <begin position="1"/>
        <end position="514"/>
    </location>
</feature>
<feature type="domain" description="MTTase N-terminal" evidence="1">
    <location>
        <begin position="68"/>
        <end position="186"/>
    </location>
</feature>
<feature type="domain" description="Radical SAM core" evidence="2">
    <location>
        <begin position="209"/>
        <end position="440"/>
    </location>
</feature>
<feature type="domain" description="TRAM" evidence="1">
    <location>
        <begin position="442"/>
        <end position="505"/>
    </location>
</feature>
<feature type="region of interest" description="Disordered" evidence="3">
    <location>
        <begin position="1"/>
        <end position="21"/>
    </location>
</feature>
<feature type="binding site" evidence="1">
    <location>
        <position position="77"/>
    </location>
    <ligand>
        <name>[4Fe-4S] cluster</name>
        <dbReference type="ChEBI" id="CHEBI:49883"/>
        <label>1</label>
    </ligand>
</feature>
<feature type="binding site" evidence="1">
    <location>
        <position position="113"/>
    </location>
    <ligand>
        <name>[4Fe-4S] cluster</name>
        <dbReference type="ChEBI" id="CHEBI:49883"/>
        <label>1</label>
    </ligand>
</feature>
<feature type="binding site" evidence="1">
    <location>
        <position position="147"/>
    </location>
    <ligand>
        <name>[4Fe-4S] cluster</name>
        <dbReference type="ChEBI" id="CHEBI:49883"/>
        <label>1</label>
    </ligand>
</feature>
<feature type="binding site" evidence="1">
    <location>
        <position position="223"/>
    </location>
    <ligand>
        <name>[4Fe-4S] cluster</name>
        <dbReference type="ChEBI" id="CHEBI:49883"/>
        <label>2</label>
        <note>4Fe-4S-S-AdoMet</note>
    </ligand>
</feature>
<feature type="binding site" evidence="1">
    <location>
        <position position="227"/>
    </location>
    <ligand>
        <name>[4Fe-4S] cluster</name>
        <dbReference type="ChEBI" id="CHEBI:49883"/>
        <label>2</label>
        <note>4Fe-4S-S-AdoMet</note>
    </ligand>
</feature>
<feature type="binding site" evidence="1">
    <location>
        <position position="230"/>
    </location>
    <ligand>
        <name>[4Fe-4S] cluster</name>
        <dbReference type="ChEBI" id="CHEBI:49883"/>
        <label>2</label>
        <note>4Fe-4S-S-AdoMet</note>
    </ligand>
</feature>
<sequence length="514" mass="58931">MNEEQRKASSVDVLAERDKKAEKDYSKYFEHVYQPPNLKEAKKRGKQEVRYNRDFQIDEKYRGMGNERTFLIKTYGCQMNAHDTEVIAGILEALGYQATTDINTADVILINTCAIRENAENKVFSEIGNLKHLKKERPDILIGVCGCMSQEESVVNKILKSYQNVDMIFGTHNIHHLPEILEEAYLSKAMVVEVWSKEGDVIENLPKVREGNIKAWVNIMYGCDKFCTYCIVPFTRGKERSRRPEDIIDEVRELAREGYKEITLLGQNVNSYGKDLQDIEYDLGDLLQAISKIAIPRVRFTTSHPWDFTDHMIDVISEGGNIVPHIHLPVQSGNNAVLKIMGRKYTRESYLDLVKRIKDRIPNVALTTDIIVGYPNESEEQFEETLTLYDEVGFEHAYTYLYSQRDGTPAAKMKDNVPLNVKKERLQRLNKKVGHYSQIAMSKYEGQTVTVLCEGSSKKDDQVLAGYTDKNKLVNFKAPKEMIGKLVEVRIDEAKQYSLNGSFIKEVEPEMVIQ</sequence>
<name>MIAB_STAAT</name>
<organism>
    <name type="scientific">Staphylococcus aureus (strain USA300 / TCH1516)</name>
    <dbReference type="NCBI Taxonomy" id="451516"/>
    <lineage>
        <taxon>Bacteria</taxon>
        <taxon>Bacillati</taxon>
        <taxon>Bacillota</taxon>
        <taxon>Bacilli</taxon>
        <taxon>Bacillales</taxon>
        <taxon>Staphylococcaceae</taxon>
        <taxon>Staphylococcus</taxon>
    </lineage>
</organism>
<reference key="1">
    <citation type="journal article" date="2007" name="BMC Microbiol.">
        <title>Subtle genetic changes enhance virulence of methicillin resistant and sensitive Staphylococcus aureus.</title>
        <authorList>
            <person name="Highlander S.K."/>
            <person name="Hulten K.G."/>
            <person name="Qin X."/>
            <person name="Jiang H."/>
            <person name="Yerrapragada S."/>
            <person name="Mason E.O. Jr."/>
            <person name="Shang Y."/>
            <person name="Williams T.M."/>
            <person name="Fortunov R.M."/>
            <person name="Liu Y."/>
            <person name="Igboeli O."/>
            <person name="Petrosino J."/>
            <person name="Tirumalai M."/>
            <person name="Uzman A."/>
            <person name="Fox G.E."/>
            <person name="Cardenas A.M."/>
            <person name="Muzny D.M."/>
            <person name="Hemphill L."/>
            <person name="Ding Y."/>
            <person name="Dugan S."/>
            <person name="Blyth P.R."/>
            <person name="Buhay C.J."/>
            <person name="Dinh H.H."/>
            <person name="Hawes A.C."/>
            <person name="Holder M."/>
            <person name="Kovar C.L."/>
            <person name="Lee S.L."/>
            <person name="Liu W."/>
            <person name="Nazareth L.V."/>
            <person name="Wang Q."/>
            <person name="Zhou J."/>
            <person name="Kaplan S.L."/>
            <person name="Weinstock G.M."/>
        </authorList>
    </citation>
    <scope>NUCLEOTIDE SEQUENCE [LARGE SCALE GENOMIC DNA]</scope>
    <source>
        <strain>USA300 / TCH1516</strain>
    </source>
</reference>
<evidence type="ECO:0000255" key="1">
    <source>
        <dbReference type="HAMAP-Rule" id="MF_01864"/>
    </source>
</evidence>
<evidence type="ECO:0000255" key="2">
    <source>
        <dbReference type="PROSITE-ProRule" id="PRU01266"/>
    </source>
</evidence>
<evidence type="ECO:0000256" key="3">
    <source>
        <dbReference type="SAM" id="MobiDB-lite"/>
    </source>
</evidence>
<dbReference type="EC" id="2.8.4.3" evidence="1"/>
<dbReference type="EMBL" id="CP000730">
    <property type="protein sequence ID" value="ABX29238.1"/>
    <property type="molecule type" value="Genomic_DNA"/>
</dbReference>
<dbReference type="RefSeq" id="WP_001001523.1">
    <property type="nucleotide sequence ID" value="NC_010079.1"/>
</dbReference>
<dbReference type="SMR" id="A8Z1W3"/>
<dbReference type="KEGG" id="sax:USA300HOU_1224"/>
<dbReference type="HOGENOM" id="CLU_018697_2_0_9"/>
<dbReference type="GO" id="GO:0005829">
    <property type="term" value="C:cytosol"/>
    <property type="evidence" value="ECO:0007669"/>
    <property type="project" value="TreeGrafter"/>
</dbReference>
<dbReference type="GO" id="GO:0051539">
    <property type="term" value="F:4 iron, 4 sulfur cluster binding"/>
    <property type="evidence" value="ECO:0007669"/>
    <property type="project" value="UniProtKB-UniRule"/>
</dbReference>
<dbReference type="GO" id="GO:0046872">
    <property type="term" value="F:metal ion binding"/>
    <property type="evidence" value="ECO:0007669"/>
    <property type="project" value="UniProtKB-KW"/>
</dbReference>
<dbReference type="GO" id="GO:0035597">
    <property type="term" value="F:N6-isopentenyladenosine methylthiotransferase activity"/>
    <property type="evidence" value="ECO:0007669"/>
    <property type="project" value="TreeGrafter"/>
</dbReference>
<dbReference type="CDD" id="cd01335">
    <property type="entry name" value="Radical_SAM"/>
    <property type="match status" value="1"/>
</dbReference>
<dbReference type="FunFam" id="3.40.50.12160:FF:000006">
    <property type="entry name" value="tRNA-2-methylthio-N(6)-dimethylallyladenosine synthase"/>
    <property type="match status" value="1"/>
</dbReference>
<dbReference type="FunFam" id="3.80.30.20:FF:000001">
    <property type="entry name" value="tRNA-2-methylthio-N(6)-dimethylallyladenosine synthase 2"/>
    <property type="match status" value="1"/>
</dbReference>
<dbReference type="Gene3D" id="3.40.50.12160">
    <property type="entry name" value="Methylthiotransferase, N-terminal domain"/>
    <property type="match status" value="1"/>
</dbReference>
<dbReference type="Gene3D" id="3.80.30.20">
    <property type="entry name" value="tm_1862 like domain"/>
    <property type="match status" value="1"/>
</dbReference>
<dbReference type="HAMAP" id="MF_01864">
    <property type="entry name" value="tRNA_metthiotr_MiaB"/>
    <property type="match status" value="1"/>
</dbReference>
<dbReference type="InterPro" id="IPR006638">
    <property type="entry name" value="Elp3/MiaA/NifB-like_rSAM"/>
</dbReference>
<dbReference type="InterPro" id="IPR005839">
    <property type="entry name" value="Methylthiotransferase"/>
</dbReference>
<dbReference type="InterPro" id="IPR020612">
    <property type="entry name" value="Methylthiotransferase_CS"/>
</dbReference>
<dbReference type="InterPro" id="IPR013848">
    <property type="entry name" value="Methylthiotransferase_N"/>
</dbReference>
<dbReference type="InterPro" id="IPR038135">
    <property type="entry name" value="Methylthiotransferase_N_sf"/>
</dbReference>
<dbReference type="InterPro" id="IPR006463">
    <property type="entry name" value="MiaB_methiolase"/>
</dbReference>
<dbReference type="InterPro" id="IPR007197">
    <property type="entry name" value="rSAM"/>
</dbReference>
<dbReference type="InterPro" id="IPR023404">
    <property type="entry name" value="rSAM_horseshoe"/>
</dbReference>
<dbReference type="InterPro" id="IPR002792">
    <property type="entry name" value="TRAM_dom"/>
</dbReference>
<dbReference type="NCBIfam" id="TIGR01574">
    <property type="entry name" value="miaB-methiolase"/>
    <property type="match status" value="1"/>
</dbReference>
<dbReference type="NCBIfam" id="TIGR00089">
    <property type="entry name" value="MiaB/RimO family radical SAM methylthiotransferase"/>
    <property type="match status" value="1"/>
</dbReference>
<dbReference type="PANTHER" id="PTHR43020">
    <property type="entry name" value="CDK5 REGULATORY SUBUNIT-ASSOCIATED PROTEIN 1"/>
    <property type="match status" value="1"/>
</dbReference>
<dbReference type="PANTHER" id="PTHR43020:SF2">
    <property type="entry name" value="MITOCHONDRIAL TRNA METHYLTHIOTRANSFERASE CDK5RAP1"/>
    <property type="match status" value="1"/>
</dbReference>
<dbReference type="Pfam" id="PF04055">
    <property type="entry name" value="Radical_SAM"/>
    <property type="match status" value="1"/>
</dbReference>
<dbReference type="Pfam" id="PF01938">
    <property type="entry name" value="TRAM"/>
    <property type="match status" value="1"/>
</dbReference>
<dbReference type="Pfam" id="PF00919">
    <property type="entry name" value="UPF0004"/>
    <property type="match status" value="1"/>
</dbReference>
<dbReference type="SFLD" id="SFLDF00273">
    <property type="entry name" value="(dimethylallyl)adenosine_tRNA"/>
    <property type="match status" value="1"/>
</dbReference>
<dbReference type="SFLD" id="SFLDG01082">
    <property type="entry name" value="B12-binding_domain_containing"/>
    <property type="match status" value="1"/>
</dbReference>
<dbReference type="SFLD" id="SFLDS00029">
    <property type="entry name" value="Radical_SAM"/>
    <property type="match status" value="1"/>
</dbReference>
<dbReference type="SMART" id="SM00729">
    <property type="entry name" value="Elp3"/>
    <property type="match status" value="1"/>
</dbReference>
<dbReference type="SUPFAM" id="SSF102114">
    <property type="entry name" value="Radical SAM enzymes"/>
    <property type="match status" value="1"/>
</dbReference>
<dbReference type="PROSITE" id="PS51449">
    <property type="entry name" value="MTTASE_N"/>
    <property type="match status" value="1"/>
</dbReference>
<dbReference type="PROSITE" id="PS01278">
    <property type="entry name" value="MTTASE_RADICAL"/>
    <property type="match status" value="1"/>
</dbReference>
<dbReference type="PROSITE" id="PS51918">
    <property type="entry name" value="RADICAL_SAM"/>
    <property type="match status" value="1"/>
</dbReference>
<dbReference type="PROSITE" id="PS50926">
    <property type="entry name" value="TRAM"/>
    <property type="match status" value="1"/>
</dbReference>
<comment type="function">
    <text evidence="1">Catalyzes the methylthiolation of N6-(dimethylallyl)adenosine (i(6)A), leading to the formation of 2-methylthio-N6-(dimethylallyl)adenosine (ms(2)i(6)A) at position 37 in tRNAs that read codons beginning with uridine.</text>
</comment>
<comment type="catalytic activity">
    <reaction evidence="1">
        <text>N(6)-dimethylallyladenosine(37) in tRNA + (sulfur carrier)-SH + AH2 + 2 S-adenosyl-L-methionine = 2-methylsulfanyl-N(6)-dimethylallyladenosine(37) in tRNA + (sulfur carrier)-H + 5'-deoxyadenosine + L-methionine + A + S-adenosyl-L-homocysteine + 2 H(+)</text>
        <dbReference type="Rhea" id="RHEA:37067"/>
        <dbReference type="Rhea" id="RHEA-COMP:10375"/>
        <dbReference type="Rhea" id="RHEA-COMP:10376"/>
        <dbReference type="Rhea" id="RHEA-COMP:14737"/>
        <dbReference type="Rhea" id="RHEA-COMP:14739"/>
        <dbReference type="ChEBI" id="CHEBI:13193"/>
        <dbReference type="ChEBI" id="CHEBI:15378"/>
        <dbReference type="ChEBI" id="CHEBI:17319"/>
        <dbReference type="ChEBI" id="CHEBI:17499"/>
        <dbReference type="ChEBI" id="CHEBI:29917"/>
        <dbReference type="ChEBI" id="CHEBI:57844"/>
        <dbReference type="ChEBI" id="CHEBI:57856"/>
        <dbReference type="ChEBI" id="CHEBI:59789"/>
        <dbReference type="ChEBI" id="CHEBI:64428"/>
        <dbReference type="ChEBI" id="CHEBI:74415"/>
        <dbReference type="ChEBI" id="CHEBI:74417"/>
        <dbReference type="EC" id="2.8.4.3"/>
    </reaction>
</comment>
<comment type="cofactor">
    <cofactor evidence="1">
        <name>[4Fe-4S] cluster</name>
        <dbReference type="ChEBI" id="CHEBI:49883"/>
    </cofactor>
    <text evidence="1">Binds 2 [4Fe-4S] clusters. One cluster is coordinated with 3 cysteines and an exchangeable S-adenosyl-L-methionine.</text>
</comment>
<comment type="subunit">
    <text evidence="1">Monomer.</text>
</comment>
<comment type="subcellular location">
    <subcellularLocation>
        <location evidence="1">Cytoplasm</location>
    </subcellularLocation>
</comment>
<comment type="similarity">
    <text evidence="1">Belongs to the methylthiotransferase family. MiaB subfamily.</text>
</comment>
<protein>
    <recommendedName>
        <fullName evidence="1">tRNA-2-methylthio-N(6)-dimethylallyladenosine synthase</fullName>
        <ecNumber evidence="1">2.8.4.3</ecNumber>
    </recommendedName>
    <alternativeName>
        <fullName evidence="1">(Dimethylallyl)adenosine tRNA methylthiotransferase MiaB</fullName>
    </alternativeName>
    <alternativeName>
        <fullName evidence="1">tRNA-i(6)A37 methylthiotransferase</fullName>
    </alternativeName>
</protein>
<proteinExistence type="inferred from homology"/>